<dbReference type="EC" id="6.1.1.20" evidence="1"/>
<dbReference type="EMBL" id="AE016823">
    <property type="protein sequence ID" value="AAS71764.1"/>
    <property type="status" value="ALT_INIT"/>
    <property type="molecule type" value="Genomic_DNA"/>
</dbReference>
<dbReference type="RefSeq" id="WP_000777483.1">
    <property type="nucleotide sequence ID" value="NC_005823.1"/>
</dbReference>
<dbReference type="SMR" id="Q72MG8"/>
<dbReference type="GeneID" id="61143085"/>
<dbReference type="KEGG" id="lic:LIC_13219"/>
<dbReference type="HOGENOM" id="CLU_016891_0_0_12"/>
<dbReference type="Proteomes" id="UP000007037">
    <property type="component" value="Chromosome I"/>
</dbReference>
<dbReference type="GO" id="GO:0009328">
    <property type="term" value="C:phenylalanine-tRNA ligase complex"/>
    <property type="evidence" value="ECO:0007669"/>
    <property type="project" value="TreeGrafter"/>
</dbReference>
<dbReference type="GO" id="GO:0005524">
    <property type="term" value="F:ATP binding"/>
    <property type="evidence" value="ECO:0007669"/>
    <property type="project" value="UniProtKB-UniRule"/>
</dbReference>
<dbReference type="GO" id="GO:0000287">
    <property type="term" value="F:magnesium ion binding"/>
    <property type="evidence" value="ECO:0007669"/>
    <property type="project" value="UniProtKB-UniRule"/>
</dbReference>
<dbReference type="GO" id="GO:0004826">
    <property type="term" value="F:phenylalanine-tRNA ligase activity"/>
    <property type="evidence" value="ECO:0007669"/>
    <property type="project" value="UniProtKB-UniRule"/>
</dbReference>
<dbReference type="GO" id="GO:0000049">
    <property type="term" value="F:tRNA binding"/>
    <property type="evidence" value="ECO:0007669"/>
    <property type="project" value="UniProtKB-KW"/>
</dbReference>
<dbReference type="GO" id="GO:0006432">
    <property type="term" value="P:phenylalanyl-tRNA aminoacylation"/>
    <property type="evidence" value="ECO:0007669"/>
    <property type="project" value="UniProtKB-UniRule"/>
</dbReference>
<dbReference type="CDD" id="cd00769">
    <property type="entry name" value="PheRS_beta_core"/>
    <property type="match status" value="1"/>
</dbReference>
<dbReference type="CDD" id="cd02796">
    <property type="entry name" value="tRNA_bind_bactPheRS"/>
    <property type="match status" value="1"/>
</dbReference>
<dbReference type="FunFam" id="2.40.50.140:FF:000045">
    <property type="entry name" value="Phenylalanine--tRNA ligase beta subunit"/>
    <property type="match status" value="1"/>
</dbReference>
<dbReference type="FunFam" id="3.50.40.10:FF:000006">
    <property type="entry name" value="Phenylalanine--tRNA ligase beta subunit"/>
    <property type="match status" value="1"/>
</dbReference>
<dbReference type="Gene3D" id="3.30.56.10">
    <property type="match status" value="2"/>
</dbReference>
<dbReference type="Gene3D" id="3.30.930.10">
    <property type="entry name" value="Bira Bifunctional Protein, Domain 2"/>
    <property type="match status" value="1"/>
</dbReference>
<dbReference type="Gene3D" id="3.30.70.380">
    <property type="entry name" value="Ferrodoxin-fold anticodon-binding domain"/>
    <property type="match status" value="1"/>
</dbReference>
<dbReference type="Gene3D" id="2.40.50.140">
    <property type="entry name" value="Nucleic acid-binding proteins"/>
    <property type="match status" value="1"/>
</dbReference>
<dbReference type="Gene3D" id="3.50.40.10">
    <property type="entry name" value="Phenylalanyl-trna Synthetase, Chain B, domain 3"/>
    <property type="match status" value="1"/>
</dbReference>
<dbReference type="HAMAP" id="MF_00283">
    <property type="entry name" value="Phe_tRNA_synth_beta1"/>
    <property type="match status" value="1"/>
</dbReference>
<dbReference type="InterPro" id="IPR045864">
    <property type="entry name" value="aa-tRNA-synth_II/BPL/LPL"/>
</dbReference>
<dbReference type="InterPro" id="IPR005146">
    <property type="entry name" value="B3/B4_tRNA-bd"/>
</dbReference>
<dbReference type="InterPro" id="IPR009061">
    <property type="entry name" value="DNA-bd_dom_put_sf"/>
</dbReference>
<dbReference type="InterPro" id="IPR005121">
    <property type="entry name" value="Fdx_antiC-bd"/>
</dbReference>
<dbReference type="InterPro" id="IPR036690">
    <property type="entry name" value="Fdx_antiC-bd_sf"/>
</dbReference>
<dbReference type="InterPro" id="IPR012340">
    <property type="entry name" value="NA-bd_OB-fold"/>
</dbReference>
<dbReference type="InterPro" id="IPR045060">
    <property type="entry name" value="Phe-tRNA-ligase_IIc_bsu"/>
</dbReference>
<dbReference type="InterPro" id="IPR004532">
    <property type="entry name" value="Phe-tRNA-ligase_IIc_bsu_bact"/>
</dbReference>
<dbReference type="InterPro" id="IPR020825">
    <property type="entry name" value="Phe-tRNA_synthase-like_B3/B4"/>
</dbReference>
<dbReference type="InterPro" id="IPR041616">
    <property type="entry name" value="PheRS_beta_core"/>
</dbReference>
<dbReference type="InterPro" id="IPR002547">
    <property type="entry name" value="tRNA-bd_dom"/>
</dbReference>
<dbReference type="InterPro" id="IPR033714">
    <property type="entry name" value="tRNA_bind_bactPheRS"/>
</dbReference>
<dbReference type="InterPro" id="IPR005147">
    <property type="entry name" value="tRNA_synthase_B5-dom"/>
</dbReference>
<dbReference type="NCBIfam" id="TIGR00472">
    <property type="entry name" value="pheT_bact"/>
    <property type="match status" value="1"/>
</dbReference>
<dbReference type="PANTHER" id="PTHR10947:SF0">
    <property type="entry name" value="PHENYLALANINE--TRNA LIGASE BETA SUBUNIT"/>
    <property type="match status" value="1"/>
</dbReference>
<dbReference type="PANTHER" id="PTHR10947">
    <property type="entry name" value="PHENYLALANYL-TRNA SYNTHETASE BETA CHAIN AND LEUCINE-RICH REPEAT-CONTAINING PROTEIN 47"/>
    <property type="match status" value="1"/>
</dbReference>
<dbReference type="Pfam" id="PF03483">
    <property type="entry name" value="B3_4"/>
    <property type="match status" value="1"/>
</dbReference>
<dbReference type="Pfam" id="PF03484">
    <property type="entry name" value="B5"/>
    <property type="match status" value="1"/>
</dbReference>
<dbReference type="Pfam" id="PF03147">
    <property type="entry name" value="FDX-ACB"/>
    <property type="match status" value="1"/>
</dbReference>
<dbReference type="Pfam" id="PF01588">
    <property type="entry name" value="tRNA_bind"/>
    <property type="match status" value="1"/>
</dbReference>
<dbReference type="Pfam" id="PF17759">
    <property type="entry name" value="tRNA_synthFbeta"/>
    <property type="match status" value="1"/>
</dbReference>
<dbReference type="SMART" id="SM00873">
    <property type="entry name" value="B3_4"/>
    <property type="match status" value="1"/>
</dbReference>
<dbReference type="SMART" id="SM00874">
    <property type="entry name" value="B5"/>
    <property type="match status" value="1"/>
</dbReference>
<dbReference type="SMART" id="SM00896">
    <property type="entry name" value="FDX-ACB"/>
    <property type="match status" value="1"/>
</dbReference>
<dbReference type="SUPFAM" id="SSF54991">
    <property type="entry name" value="Anticodon-binding domain of PheRS"/>
    <property type="match status" value="1"/>
</dbReference>
<dbReference type="SUPFAM" id="SSF55681">
    <property type="entry name" value="Class II aaRS and biotin synthetases"/>
    <property type="match status" value="1"/>
</dbReference>
<dbReference type="SUPFAM" id="SSF50249">
    <property type="entry name" value="Nucleic acid-binding proteins"/>
    <property type="match status" value="1"/>
</dbReference>
<dbReference type="SUPFAM" id="SSF56037">
    <property type="entry name" value="PheT/TilS domain"/>
    <property type="match status" value="1"/>
</dbReference>
<dbReference type="SUPFAM" id="SSF46955">
    <property type="entry name" value="Putative DNA-binding domain"/>
    <property type="match status" value="1"/>
</dbReference>
<dbReference type="PROSITE" id="PS51483">
    <property type="entry name" value="B5"/>
    <property type="match status" value="1"/>
</dbReference>
<dbReference type="PROSITE" id="PS51447">
    <property type="entry name" value="FDX_ACB"/>
    <property type="match status" value="1"/>
</dbReference>
<dbReference type="PROSITE" id="PS50886">
    <property type="entry name" value="TRBD"/>
    <property type="match status" value="1"/>
</dbReference>
<feature type="chain" id="PRO_0000126904" description="Phenylalanine--tRNA ligase beta subunit">
    <location>
        <begin position="1"/>
        <end position="808"/>
    </location>
</feature>
<feature type="domain" description="tRNA-binding" evidence="1">
    <location>
        <begin position="40"/>
        <end position="149"/>
    </location>
</feature>
<feature type="domain" description="B5" evidence="1">
    <location>
        <begin position="407"/>
        <end position="484"/>
    </location>
</feature>
<feature type="domain" description="FDX-ACB" evidence="1">
    <location>
        <begin position="716"/>
        <end position="808"/>
    </location>
</feature>
<feature type="binding site" evidence="1">
    <location>
        <position position="462"/>
    </location>
    <ligand>
        <name>Mg(2+)</name>
        <dbReference type="ChEBI" id="CHEBI:18420"/>
        <note>shared with alpha subunit</note>
    </ligand>
</feature>
<feature type="binding site" evidence="1">
    <location>
        <position position="468"/>
    </location>
    <ligand>
        <name>Mg(2+)</name>
        <dbReference type="ChEBI" id="CHEBI:18420"/>
        <note>shared with alpha subunit</note>
    </ligand>
</feature>
<feature type="binding site" evidence="1">
    <location>
        <position position="471"/>
    </location>
    <ligand>
        <name>Mg(2+)</name>
        <dbReference type="ChEBI" id="CHEBI:18420"/>
        <note>shared with alpha subunit</note>
    </ligand>
</feature>
<feature type="binding site" evidence="1">
    <location>
        <position position="472"/>
    </location>
    <ligand>
        <name>Mg(2+)</name>
        <dbReference type="ChEBI" id="CHEBI:18420"/>
        <note>shared with alpha subunit</note>
    </ligand>
</feature>
<reference key="1">
    <citation type="journal article" date="2004" name="J. Bacteriol.">
        <title>Comparative genomics of two Leptospira interrogans serovars reveals novel insights into physiology and pathogenesis.</title>
        <authorList>
            <person name="Nascimento A.L.T.O."/>
            <person name="Ko A.I."/>
            <person name="Martins E.A.L."/>
            <person name="Monteiro-Vitorello C.B."/>
            <person name="Ho P.L."/>
            <person name="Haake D.A."/>
            <person name="Verjovski-Almeida S."/>
            <person name="Hartskeerl R.A."/>
            <person name="Marques M.V."/>
            <person name="Oliveira M.C."/>
            <person name="Menck C.F.M."/>
            <person name="Leite L.C.C."/>
            <person name="Carrer H."/>
            <person name="Coutinho L.L."/>
            <person name="Degrave W.M."/>
            <person name="Dellagostin O.A."/>
            <person name="El-Dorry H."/>
            <person name="Ferro E.S."/>
            <person name="Ferro M.I.T."/>
            <person name="Furlan L.R."/>
            <person name="Gamberini M."/>
            <person name="Giglioti E.A."/>
            <person name="Goes-Neto A."/>
            <person name="Goldman G.H."/>
            <person name="Goldman M.H.S."/>
            <person name="Harakava R."/>
            <person name="Jeronimo S.M.B."/>
            <person name="Junqueira-de-Azevedo I.L.M."/>
            <person name="Kimura E.T."/>
            <person name="Kuramae E.E."/>
            <person name="Lemos E.G.M."/>
            <person name="Lemos M.V.F."/>
            <person name="Marino C.L."/>
            <person name="Nunes L.R."/>
            <person name="de Oliveira R.C."/>
            <person name="Pereira G.G."/>
            <person name="Reis M.S."/>
            <person name="Schriefer A."/>
            <person name="Siqueira W.J."/>
            <person name="Sommer P."/>
            <person name="Tsai S.M."/>
            <person name="Simpson A.J.G."/>
            <person name="Ferro J.A."/>
            <person name="Camargo L.E.A."/>
            <person name="Kitajima J.P."/>
            <person name="Setubal J.C."/>
            <person name="Van Sluys M.A."/>
        </authorList>
    </citation>
    <scope>NUCLEOTIDE SEQUENCE [LARGE SCALE GENOMIC DNA]</scope>
    <source>
        <strain>Fiocruz L1-130</strain>
    </source>
</reference>
<organism>
    <name type="scientific">Leptospira interrogans serogroup Icterohaemorrhagiae serovar copenhageni (strain Fiocruz L1-130)</name>
    <dbReference type="NCBI Taxonomy" id="267671"/>
    <lineage>
        <taxon>Bacteria</taxon>
        <taxon>Pseudomonadati</taxon>
        <taxon>Spirochaetota</taxon>
        <taxon>Spirochaetia</taxon>
        <taxon>Leptospirales</taxon>
        <taxon>Leptospiraceae</taxon>
        <taxon>Leptospira</taxon>
    </lineage>
</organism>
<sequence length="808" mass="92050">MKLSLDWMNDFTPLKEVGLDAILKKIAISVCEIDDATEFRPELDFVKIVRIESLEKHPSADKLQIAQVFDGSSKSQIVTGVTNVKIGDLVPLAIPGAKLGDKEILESELRGVKSSGMLCSEKELFLSEEGNGVWILNGLDQAEVGKTIRSFLYYNDIIFEVDNKSITHRPDLWSHFGFARELASQLRLPIVFNPFESLWNFDLSVKLPKVLENQNAHSYYASSISGVSVFPSKRKFQSRLQKCGVRVINNVVDVSNYVMLEMGQPTHFFDKKFLENQGGISLEVSFAKKGESFALLDETSPALEEEVLLIRNQGKPVAIAGVMGGKESAVQNTTTEIVMESAVFMRERIRKSIRSTGIRSDSSVRYEKGLEATTTLPVIRRALNLLKENGCSELKASEPVGFLHIPHKEVRIHTDIHFINAKLGVTLSQGDITDILERLHFIVSWKGEHLEVLVPKFRHNYDVTIPEDLVEEIGRTKGYDTIQVSPLLAEVKTPIRNLNRELERKCKTFFAIALKYHEVFNYSFQSYKENEFSGDPKLSVKIKNEMPEEQSVLRNSLLPSLLKNTRTNQDRFSEIKIFEFGRVYFNLPEPENEKKIFAFAVSLDKKSSEPDLKLLEEDFLKIKKEVESFLESIQIYEYTWKIQQETIFHPGANLCLVARSGKDGLETIVGNLGYVHPAILDSFELKKRVIYGSFEFERIVELWNQNRKVSRFVTPSQFPEAEIDLSILVGEKENTNVFTDLVKLERIPELKEGWVYSQFMGGNVPEGKKSVSYRFRLVNYERTFTQERIKEISDQLVILAGKNGFVLR</sequence>
<proteinExistence type="inferred from homology"/>
<protein>
    <recommendedName>
        <fullName evidence="1">Phenylalanine--tRNA ligase beta subunit</fullName>
        <ecNumber evidence="1">6.1.1.20</ecNumber>
    </recommendedName>
    <alternativeName>
        <fullName evidence="1">Phenylalanyl-tRNA synthetase beta subunit</fullName>
        <shortName evidence="1">PheRS</shortName>
    </alternativeName>
</protein>
<evidence type="ECO:0000255" key="1">
    <source>
        <dbReference type="HAMAP-Rule" id="MF_00283"/>
    </source>
</evidence>
<evidence type="ECO:0000305" key="2"/>
<keyword id="KW-0030">Aminoacyl-tRNA synthetase</keyword>
<keyword id="KW-0067">ATP-binding</keyword>
<keyword id="KW-0963">Cytoplasm</keyword>
<keyword id="KW-0436">Ligase</keyword>
<keyword id="KW-0460">Magnesium</keyword>
<keyword id="KW-0479">Metal-binding</keyword>
<keyword id="KW-0547">Nucleotide-binding</keyword>
<keyword id="KW-0648">Protein biosynthesis</keyword>
<keyword id="KW-0694">RNA-binding</keyword>
<keyword id="KW-0820">tRNA-binding</keyword>
<accession>Q72MG8</accession>
<gene>
    <name evidence="1" type="primary">pheT</name>
    <name type="ordered locus">LIC_13219</name>
</gene>
<comment type="catalytic activity">
    <reaction evidence="1">
        <text>tRNA(Phe) + L-phenylalanine + ATP = L-phenylalanyl-tRNA(Phe) + AMP + diphosphate + H(+)</text>
        <dbReference type="Rhea" id="RHEA:19413"/>
        <dbReference type="Rhea" id="RHEA-COMP:9668"/>
        <dbReference type="Rhea" id="RHEA-COMP:9699"/>
        <dbReference type="ChEBI" id="CHEBI:15378"/>
        <dbReference type="ChEBI" id="CHEBI:30616"/>
        <dbReference type="ChEBI" id="CHEBI:33019"/>
        <dbReference type="ChEBI" id="CHEBI:58095"/>
        <dbReference type="ChEBI" id="CHEBI:78442"/>
        <dbReference type="ChEBI" id="CHEBI:78531"/>
        <dbReference type="ChEBI" id="CHEBI:456215"/>
        <dbReference type="EC" id="6.1.1.20"/>
    </reaction>
</comment>
<comment type="cofactor">
    <cofactor evidence="1">
        <name>Mg(2+)</name>
        <dbReference type="ChEBI" id="CHEBI:18420"/>
    </cofactor>
    <text evidence="1">Binds 2 magnesium ions per tetramer.</text>
</comment>
<comment type="subunit">
    <text evidence="1">Tetramer of two alpha and two beta subunits.</text>
</comment>
<comment type="subcellular location">
    <subcellularLocation>
        <location evidence="1">Cytoplasm</location>
    </subcellularLocation>
</comment>
<comment type="similarity">
    <text evidence="1">Belongs to the phenylalanyl-tRNA synthetase beta subunit family. Type 1 subfamily.</text>
</comment>
<comment type="sequence caution" evidence="2">
    <conflict type="erroneous initiation">
        <sequence resource="EMBL-CDS" id="AAS71764"/>
    </conflict>
</comment>
<name>SYFB_LEPIC</name>